<protein>
    <recommendedName>
        <fullName evidence="1">Universal stress protein B</fullName>
    </recommendedName>
</protein>
<comment type="subcellular location">
    <subcellularLocation>
        <location evidence="1">Cell inner membrane</location>
        <topology evidence="1">Multi-pass membrane protein</topology>
    </subcellularLocation>
</comment>
<comment type="similarity">
    <text evidence="1">Belongs to the universal stress protein B family.</text>
</comment>
<proteinExistence type="inferred from homology"/>
<name>USPB_YERPP</name>
<keyword id="KW-0997">Cell inner membrane</keyword>
<keyword id="KW-1003">Cell membrane</keyword>
<keyword id="KW-0472">Membrane</keyword>
<keyword id="KW-0812">Transmembrane</keyword>
<keyword id="KW-1133">Transmembrane helix</keyword>
<gene>
    <name evidence="1" type="primary">uspB</name>
    <name type="ordered locus">YPDSF_3334</name>
</gene>
<sequence length="111" mass="12680">MISTVALFWALCVVCVVNMARYYSSLRALLVVLRGCDPLLYQYVDGGGFFTSHGQPSKQIRLVGYIFAQRYLDHHDPEFIRRCERLRGQFILTSALCGLVVVSLVALMLWY</sequence>
<dbReference type="EMBL" id="CP000668">
    <property type="protein sequence ID" value="ABP41689.1"/>
    <property type="molecule type" value="Genomic_DNA"/>
</dbReference>
<dbReference type="RefSeq" id="WP_002209527.1">
    <property type="nucleotide sequence ID" value="NZ_CP009715.1"/>
</dbReference>
<dbReference type="GeneID" id="96663308"/>
<dbReference type="KEGG" id="ypp:YPDSF_3334"/>
<dbReference type="PATRIC" id="fig|386656.14.peg.998"/>
<dbReference type="GO" id="GO:0005886">
    <property type="term" value="C:plasma membrane"/>
    <property type="evidence" value="ECO:0007669"/>
    <property type="project" value="UniProtKB-SubCell"/>
</dbReference>
<dbReference type="HAMAP" id="MF_01088">
    <property type="entry name" value="UspB"/>
    <property type="match status" value="1"/>
</dbReference>
<dbReference type="InterPro" id="IPR019598">
    <property type="entry name" value="Universal_stress_protein_B"/>
</dbReference>
<dbReference type="NCBIfam" id="NF003435">
    <property type="entry name" value="PRK04960.1"/>
    <property type="match status" value="1"/>
</dbReference>
<dbReference type="Pfam" id="PF10625">
    <property type="entry name" value="UspB"/>
    <property type="match status" value="1"/>
</dbReference>
<organism>
    <name type="scientific">Yersinia pestis (strain Pestoides F)</name>
    <dbReference type="NCBI Taxonomy" id="386656"/>
    <lineage>
        <taxon>Bacteria</taxon>
        <taxon>Pseudomonadati</taxon>
        <taxon>Pseudomonadota</taxon>
        <taxon>Gammaproteobacteria</taxon>
        <taxon>Enterobacterales</taxon>
        <taxon>Yersiniaceae</taxon>
        <taxon>Yersinia</taxon>
    </lineage>
</organism>
<reference key="1">
    <citation type="submission" date="2007-02" db="EMBL/GenBank/DDBJ databases">
        <title>Complete sequence of chromosome of Yersinia pestis Pestoides F.</title>
        <authorList>
            <consortium name="US DOE Joint Genome Institute"/>
            <person name="Copeland A."/>
            <person name="Lucas S."/>
            <person name="Lapidus A."/>
            <person name="Barry K."/>
            <person name="Detter J.C."/>
            <person name="Glavina del Rio T."/>
            <person name="Hammon N."/>
            <person name="Israni S."/>
            <person name="Dalin E."/>
            <person name="Tice H."/>
            <person name="Pitluck S."/>
            <person name="Di Bartolo G."/>
            <person name="Chain P."/>
            <person name="Malfatti S."/>
            <person name="Shin M."/>
            <person name="Vergez L."/>
            <person name="Schmutz J."/>
            <person name="Larimer F."/>
            <person name="Land M."/>
            <person name="Hauser L."/>
            <person name="Worsham P."/>
            <person name="Chu M."/>
            <person name="Bearden S."/>
            <person name="Garcia E."/>
            <person name="Richardson P."/>
        </authorList>
    </citation>
    <scope>NUCLEOTIDE SEQUENCE [LARGE SCALE GENOMIC DNA]</scope>
    <source>
        <strain>Pestoides F</strain>
    </source>
</reference>
<accession>A4TQX7</accession>
<feature type="chain" id="PRO_1000064888" description="Universal stress protein B">
    <location>
        <begin position="1"/>
        <end position="111"/>
    </location>
</feature>
<feature type="transmembrane region" description="Helical" evidence="1">
    <location>
        <begin position="1"/>
        <end position="21"/>
    </location>
</feature>
<feature type="transmembrane region" description="Helical" evidence="1">
    <location>
        <begin position="90"/>
        <end position="110"/>
    </location>
</feature>
<evidence type="ECO:0000255" key="1">
    <source>
        <dbReference type="HAMAP-Rule" id="MF_01088"/>
    </source>
</evidence>